<name>BIM1_ARATH</name>
<organism>
    <name type="scientific">Arabidopsis thaliana</name>
    <name type="common">Mouse-ear cress</name>
    <dbReference type="NCBI Taxonomy" id="3702"/>
    <lineage>
        <taxon>Eukaryota</taxon>
        <taxon>Viridiplantae</taxon>
        <taxon>Streptophyta</taxon>
        <taxon>Embryophyta</taxon>
        <taxon>Tracheophyta</taxon>
        <taxon>Spermatophyta</taxon>
        <taxon>Magnoliopsida</taxon>
        <taxon>eudicotyledons</taxon>
        <taxon>Gunneridae</taxon>
        <taxon>Pentapetalae</taxon>
        <taxon>rosids</taxon>
        <taxon>malvids</taxon>
        <taxon>Brassicales</taxon>
        <taxon>Brassicaceae</taxon>
        <taxon>Camelineae</taxon>
        <taxon>Arabidopsis</taxon>
    </lineage>
</organism>
<reference key="1">
    <citation type="journal article" date="2003" name="Mol. Biol. Evol.">
        <title>The basic helix-loop-helix transcription factor family in plants: a genome-wide study of protein structure and functional diversity.</title>
        <authorList>
            <person name="Heim M.A."/>
            <person name="Jakoby M."/>
            <person name="Werber M."/>
            <person name="Martin C."/>
            <person name="Weisshaar B."/>
            <person name="Bailey P.C."/>
        </authorList>
    </citation>
    <scope>NUCLEOTIDE SEQUENCE [MRNA] (ISOFORM 1)</scope>
    <scope>TISSUE SPECIFICITY</scope>
    <scope>INDUCTION</scope>
    <scope>GENE FAMILY</scope>
    <scope>NOMENCLATURE</scope>
    <source>
        <strain>cv. Columbia</strain>
    </source>
</reference>
<reference key="2">
    <citation type="journal article" date="2005" name="Cell">
        <title>A new class of transcription factors mediates brassinosteroid-regulated gene expression in Arabidopsis.</title>
        <authorList>
            <person name="Yin Y."/>
            <person name="Vafeados D."/>
            <person name="Tao Y."/>
            <person name="Yoshida S."/>
            <person name="Asami T."/>
            <person name="Chory J."/>
        </authorList>
    </citation>
    <scope>NUCLEOTIDE SEQUENCE [MRNA] (ISOFORM 1)</scope>
    <scope>FUNCTION</scope>
    <scope>DNA-BINDING</scope>
    <scope>INTERACTION WITH BZR2/BES1</scope>
</reference>
<reference key="3">
    <citation type="journal article" date="2000" name="Nature">
        <title>Sequence and analysis of chromosome 5 of the plant Arabidopsis thaliana.</title>
        <authorList>
            <person name="Tabata S."/>
            <person name="Kaneko T."/>
            <person name="Nakamura Y."/>
            <person name="Kotani H."/>
            <person name="Kato T."/>
            <person name="Asamizu E."/>
            <person name="Miyajima N."/>
            <person name="Sasamoto S."/>
            <person name="Kimura T."/>
            <person name="Hosouchi T."/>
            <person name="Kawashima K."/>
            <person name="Kohara M."/>
            <person name="Matsumoto M."/>
            <person name="Matsuno A."/>
            <person name="Muraki A."/>
            <person name="Nakayama S."/>
            <person name="Nakazaki N."/>
            <person name="Naruo K."/>
            <person name="Okumura S."/>
            <person name="Shinpo S."/>
            <person name="Takeuchi C."/>
            <person name="Wada T."/>
            <person name="Watanabe A."/>
            <person name="Yamada M."/>
            <person name="Yasuda M."/>
            <person name="Sato S."/>
            <person name="de la Bastide M."/>
            <person name="Huang E."/>
            <person name="Spiegel L."/>
            <person name="Gnoj L."/>
            <person name="O'Shaughnessy A."/>
            <person name="Preston R."/>
            <person name="Habermann K."/>
            <person name="Murray J."/>
            <person name="Johnson D."/>
            <person name="Rohlfing T."/>
            <person name="Nelson J."/>
            <person name="Stoneking T."/>
            <person name="Pepin K."/>
            <person name="Spieth J."/>
            <person name="Sekhon M."/>
            <person name="Armstrong J."/>
            <person name="Becker M."/>
            <person name="Belter E."/>
            <person name="Cordum H."/>
            <person name="Cordes M."/>
            <person name="Courtney L."/>
            <person name="Courtney W."/>
            <person name="Dante M."/>
            <person name="Du H."/>
            <person name="Edwards J."/>
            <person name="Fryman J."/>
            <person name="Haakensen B."/>
            <person name="Lamar E."/>
            <person name="Latreille P."/>
            <person name="Leonard S."/>
            <person name="Meyer R."/>
            <person name="Mulvaney E."/>
            <person name="Ozersky P."/>
            <person name="Riley A."/>
            <person name="Strowmatt C."/>
            <person name="Wagner-McPherson C."/>
            <person name="Wollam A."/>
            <person name="Yoakum M."/>
            <person name="Bell M."/>
            <person name="Dedhia N."/>
            <person name="Parnell L."/>
            <person name="Shah R."/>
            <person name="Rodriguez M."/>
            <person name="Hoon See L."/>
            <person name="Vil D."/>
            <person name="Baker J."/>
            <person name="Kirchoff K."/>
            <person name="Toth K."/>
            <person name="King L."/>
            <person name="Bahret A."/>
            <person name="Miller B."/>
            <person name="Marra M.A."/>
            <person name="Martienssen R."/>
            <person name="McCombie W.R."/>
            <person name="Wilson R.K."/>
            <person name="Murphy G."/>
            <person name="Bancroft I."/>
            <person name="Volckaert G."/>
            <person name="Wambutt R."/>
            <person name="Duesterhoeft A."/>
            <person name="Stiekema W."/>
            <person name="Pohl T."/>
            <person name="Entian K.-D."/>
            <person name="Terryn N."/>
            <person name="Hartley N."/>
            <person name="Bent E."/>
            <person name="Johnson S."/>
            <person name="Langham S.-A."/>
            <person name="McCullagh B."/>
            <person name="Robben J."/>
            <person name="Grymonprez B."/>
            <person name="Zimmermann W."/>
            <person name="Ramsperger U."/>
            <person name="Wedler H."/>
            <person name="Balke K."/>
            <person name="Wedler E."/>
            <person name="Peters S."/>
            <person name="van Staveren M."/>
            <person name="Dirkse W."/>
            <person name="Mooijman P."/>
            <person name="Klein Lankhorst R."/>
            <person name="Weitzenegger T."/>
            <person name="Bothe G."/>
            <person name="Rose M."/>
            <person name="Hauf J."/>
            <person name="Berneiser S."/>
            <person name="Hempel S."/>
            <person name="Feldpausch M."/>
            <person name="Lamberth S."/>
            <person name="Villarroel R."/>
            <person name="Gielen J."/>
            <person name="Ardiles W."/>
            <person name="Bents O."/>
            <person name="Lemcke K."/>
            <person name="Kolesov G."/>
            <person name="Mayer K.F.X."/>
            <person name="Rudd S."/>
            <person name="Schoof H."/>
            <person name="Schueller C."/>
            <person name="Zaccaria P."/>
            <person name="Mewes H.-W."/>
            <person name="Bevan M."/>
            <person name="Fransz P.F."/>
        </authorList>
    </citation>
    <scope>NUCLEOTIDE SEQUENCE [LARGE SCALE GENOMIC DNA]</scope>
    <source>
        <strain>cv. Columbia</strain>
    </source>
</reference>
<reference key="4">
    <citation type="journal article" date="2017" name="Plant J.">
        <title>Araport11: a complete reannotation of the Arabidopsis thaliana reference genome.</title>
        <authorList>
            <person name="Cheng C.Y."/>
            <person name="Krishnakumar V."/>
            <person name="Chan A.P."/>
            <person name="Thibaud-Nissen F."/>
            <person name="Schobel S."/>
            <person name="Town C.D."/>
        </authorList>
    </citation>
    <scope>GENOME REANNOTATION</scope>
    <source>
        <strain>cv. Columbia</strain>
    </source>
</reference>
<reference key="5">
    <citation type="submission" date="2006-12" db="EMBL/GenBank/DDBJ databases">
        <title>Arabidopsis ORF clones.</title>
        <authorList>
            <person name="Bautista V.R."/>
            <person name="Kim C.J."/>
            <person name="Chen H."/>
            <person name="Wu S.Y."/>
            <person name="De Los Reyes C."/>
            <person name="Ecker J.R."/>
        </authorList>
    </citation>
    <scope>NUCLEOTIDE SEQUENCE [LARGE SCALE MRNA] (ISOFORM 2)</scope>
    <source>
        <strain>cv. Columbia</strain>
    </source>
</reference>
<reference key="6">
    <citation type="journal article" date="2003" name="Plant Cell">
        <title>The Arabidopsis basic/helix-loop-helix transcription factor family.</title>
        <authorList>
            <person name="Toledo-Ortiz G."/>
            <person name="Huq E."/>
            <person name="Quail P.H."/>
        </authorList>
    </citation>
    <scope>GENE FAMILY</scope>
</reference>
<reference key="7">
    <citation type="journal article" date="2003" name="Plant Cell">
        <title>Update on the basic helix-loop-helix transcription factor gene family in Arabidopsis thaliana.</title>
        <authorList>
            <person name="Bailey P.C."/>
            <person name="Martin C."/>
            <person name="Toledo-Ortiz G."/>
            <person name="Quail P.H."/>
            <person name="Huq E."/>
            <person name="Heim M.A."/>
            <person name="Jakoby M."/>
            <person name="Werber M."/>
            <person name="Weisshaar B."/>
        </authorList>
    </citation>
    <scope>GENE FAMILY</scope>
    <scope>NOMENCLATURE</scope>
</reference>
<reference key="8">
    <citation type="journal article" date="2007" name="Development">
        <title>Regulation of the Arabidopsis root vascular initial population by LONESOME HIGHWAY.</title>
        <authorList>
            <person name="Ohashi-Ito K."/>
            <person name="Bergmann D.C."/>
        </authorList>
    </citation>
    <scope>INTERACTION WITH LHW</scope>
</reference>
<evidence type="ECO:0000255" key="1">
    <source>
        <dbReference type="PROSITE-ProRule" id="PRU00981"/>
    </source>
</evidence>
<evidence type="ECO:0000256" key="2">
    <source>
        <dbReference type="SAM" id="MobiDB-lite"/>
    </source>
</evidence>
<evidence type="ECO:0000269" key="3">
    <source>
    </source>
</evidence>
<evidence type="ECO:0000269" key="4">
    <source>
    </source>
</evidence>
<evidence type="ECO:0000269" key="5">
    <source>
    </source>
</evidence>
<evidence type="ECO:0000303" key="6">
    <source ref="5"/>
</evidence>
<evidence type="ECO:0000305" key="7"/>
<dbReference type="EMBL" id="AF488581">
    <property type="status" value="NOT_ANNOTATED_CDS"/>
    <property type="molecule type" value="mRNA"/>
</dbReference>
<dbReference type="EMBL" id="AL357612">
    <property type="protein sequence ID" value="CAB93714.1"/>
    <property type="status" value="ALT_SEQ"/>
    <property type="molecule type" value="Genomic_DNA"/>
</dbReference>
<dbReference type="EMBL" id="CP002688">
    <property type="protein sequence ID" value="AED91250.1"/>
    <property type="molecule type" value="Genomic_DNA"/>
</dbReference>
<dbReference type="EMBL" id="CP002688">
    <property type="protein sequence ID" value="AED91251.1"/>
    <property type="molecule type" value="Genomic_DNA"/>
</dbReference>
<dbReference type="EMBL" id="CP002688">
    <property type="protein sequence ID" value="AED91253.1"/>
    <property type="molecule type" value="Genomic_DNA"/>
</dbReference>
<dbReference type="EMBL" id="BT029780">
    <property type="protein sequence ID" value="ABM06050.1"/>
    <property type="molecule type" value="mRNA"/>
</dbReference>
<dbReference type="PIR" id="T50498">
    <property type="entry name" value="T50498"/>
</dbReference>
<dbReference type="RefSeq" id="NP_001119190.1">
    <molecule id="Q9LEZ3-1"/>
    <property type="nucleotide sequence ID" value="NM_001125718.1"/>
</dbReference>
<dbReference type="RefSeq" id="NP_001190257.1">
    <molecule id="Q9LEZ3-1"/>
    <property type="nucleotide sequence ID" value="NM_001203328.2"/>
</dbReference>
<dbReference type="RefSeq" id="NP_001318507.1">
    <molecule id="Q9LEZ3-2"/>
    <property type="nucleotide sequence ID" value="NM_001342983.1"/>
</dbReference>
<dbReference type="SMR" id="Q9LEZ3"/>
<dbReference type="BioGRID" id="15986">
    <property type="interactions" value="40"/>
</dbReference>
<dbReference type="FunCoup" id="Q9LEZ3">
    <property type="interactions" value="665"/>
</dbReference>
<dbReference type="IntAct" id="Q9LEZ3">
    <property type="interactions" value="34"/>
</dbReference>
<dbReference type="STRING" id="3702.Q9LEZ3"/>
<dbReference type="GlyGen" id="Q9LEZ3">
    <property type="glycosylation" value="1 site"/>
</dbReference>
<dbReference type="iPTMnet" id="Q9LEZ3"/>
<dbReference type="PaxDb" id="3702-AT5G08130.5"/>
<dbReference type="ProteomicsDB" id="240426">
    <molecule id="Q9LEZ3-1"/>
</dbReference>
<dbReference type="EnsemblPlants" id="AT5G08130.1">
    <molecule id="Q9LEZ3-2"/>
    <property type="protein sequence ID" value="AT5G08130.1"/>
    <property type="gene ID" value="AT5G08130"/>
</dbReference>
<dbReference type="EnsemblPlants" id="AT5G08130.2">
    <molecule id="Q9LEZ3-1"/>
    <property type="protein sequence ID" value="AT5G08130.2"/>
    <property type="gene ID" value="AT5G08130"/>
</dbReference>
<dbReference type="EnsemblPlants" id="AT5G08130.4">
    <molecule id="Q9LEZ3-1"/>
    <property type="protein sequence ID" value="AT5G08130.4"/>
    <property type="gene ID" value="AT5G08130"/>
</dbReference>
<dbReference type="GeneID" id="830708"/>
<dbReference type="Gramene" id="AT5G08130.1">
    <molecule id="Q9LEZ3-2"/>
    <property type="protein sequence ID" value="AT5G08130.1"/>
    <property type="gene ID" value="AT5G08130"/>
</dbReference>
<dbReference type="Gramene" id="AT5G08130.2">
    <molecule id="Q9LEZ3-1"/>
    <property type="protein sequence ID" value="AT5G08130.2"/>
    <property type="gene ID" value="AT5G08130"/>
</dbReference>
<dbReference type="Gramene" id="AT5G08130.4">
    <molecule id="Q9LEZ3-1"/>
    <property type="protein sequence ID" value="AT5G08130.4"/>
    <property type="gene ID" value="AT5G08130"/>
</dbReference>
<dbReference type="KEGG" id="ath:AT5G08130"/>
<dbReference type="Araport" id="AT5G08130"/>
<dbReference type="TAIR" id="AT5G08130">
    <property type="gene designation" value="BIM1"/>
</dbReference>
<dbReference type="eggNOG" id="ENOG502QUDM">
    <property type="taxonomic scope" value="Eukaryota"/>
</dbReference>
<dbReference type="InParanoid" id="Q9LEZ3"/>
<dbReference type="OMA" id="QANIRPT"/>
<dbReference type="PhylomeDB" id="Q9LEZ3"/>
<dbReference type="PRO" id="PR:Q9LEZ3"/>
<dbReference type="Proteomes" id="UP000006548">
    <property type="component" value="Chromosome 5"/>
</dbReference>
<dbReference type="ExpressionAtlas" id="Q9LEZ3">
    <property type="expression patterns" value="baseline and differential"/>
</dbReference>
<dbReference type="GO" id="GO:0005634">
    <property type="term" value="C:nucleus"/>
    <property type="evidence" value="ECO:0007669"/>
    <property type="project" value="UniProtKB-SubCell"/>
</dbReference>
<dbReference type="GO" id="GO:0003677">
    <property type="term" value="F:DNA binding"/>
    <property type="evidence" value="ECO:0007669"/>
    <property type="project" value="UniProtKB-KW"/>
</dbReference>
<dbReference type="GO" id="GO:0003700">
    <property type="term" value="F:DNA-binding transcription factor activity"/>
    <property type="evidence" value="ECO:0007669"/>
    <property type="project" value="InterPro"/>
</dbReference>
<dbReference type="GO" id="GO:0042802">
    <property type="term" value="F:identical protein binding"/>
    <property type="evidence" value="ECO:0000353"/>
    <property type="project" value="IntAct"/>
</dbReference>
<dbReference type="GO" id="GO:0046983">
    <property type="term" value="F:protein dimerization activity"/>
    <property type="evidence" value="ECO:0007669"/>
    <property type="project" value="InterPro"/>
</dbReference>
<dbReference type="GO" id="GO:0006351">
    <property type="term" value="P:DNA-templated transcription"/>
    <property type="evidence" value="ECO:0007669"/>
    <property type="project" value="InterPro"/>
</dbReference>
<dbReference type="CDD" id="cd11453">
    <property type="entry name" value="bHLH_AtBIM_like"/>
    <property type="match status" value="1"/>
</dbReference>
<dbReference type="FunFam" id="4.10.280.10:FF:000093">
    <property type="entry name" value="BHLH domain class transcription factor"/>
    <property type="match status" value="1"/>
</dbReference>
<dbReference type="Gene3D" id="4.10.280.10">
    <property type="entry name" value="Helix-loop-helix DNA-binding domain"/>
    <property type="match status" value="1"/>
</dbReference>
<dbReference type="InterPro" id="IPR011598">
    <property type="entry name" value="bHLH_dom"/>
</dbReference>
<dbReference type="InterPro" id="IPR044295">
    <property type="entry name" value="BIM1/2/3"/>
</dbReference>
<dbReference type="InterPro" id="IPR036638">
    <property type="entry name" value="HLH_DNA-bd_sf"/>
</dbReference>
<dbReference type="PANTHER" id="PTHR46412">
    <property type="entry name" value="BES1-INTERACTING MYC-LIKE PROTEIN"/>
    <property type="match status" value="1"/>
</dbReference>
<dbReference type="PANTHER" id="PTHR46412:SF3">
    <property type="entry name" value="TRANSCRIPTION FACTOR BIM1"/>
    <property type="match status" value="1"/>
</dbReference>
<dbReference type="Pfam" id="PF00010">
    <property type="entry name" value="HLH"/>
    <property type="match status" value="1"/>
</dbReference>
<dbReference type="SMART" id="SM00353">
    <property type="entry name" value="HLH"/>
    <property type="match status" value="1"/>
</dbReference>
<dbReference type="SUPFAM" id="SSF47459">
    <property type="entry name" value="HLH, helix-loop-helix DNA-binding domain"/>
    <property type="match status" value="1"/>
</dbReference>
<dbReference type="PROSITE" id="PS50888">
    <property type="entry name" value="BHLH"/>
    <property type="match status" value="1"/>
</dbReference>
<gene>
    <name type="primary">BIM1</name>
    <name type="synonym">BHLH46</name>
    <name type="synonym">EN126</name>
    <name type="ordered locus">At5g08130</name>
    <name type="ORF">T22D6.70</name>
</gene>
<sequence length="529" mass="58710">MELPQPRPFKTQGRKPTHDFLSLCSHSTVHPDPKPTPPPSSQGSHLKTHDFLQPLECVGAKEDVSRINSTTTASEKPPPPAPPPPLQHVLPGGIGTYTISPIPYFHHHHQRIPKPELSPPMMFNANERNVLDENSNSNCSSYAAASSGFTLWDESASGKKGQTRKENSVGERVNMRADVAATVGQWPVAERRSQSLTNNHMSGFSSLSSSQGSVLKSQSFMDMIRSAKGSSQEDDLDDEEDFIMKKESSSTSQSHRVDLRVKADVRGSPNDQKLNTPRSKHSATEQRRRSKINDRFQMLRQLIPNSDQKRDKASFLLEVIEYIQFLQEKADKYVTSYQGWNHEPAKLLNWQSNNNQQLVPEGVAFAPKLEEEKNNIPVSVLATAQGVVIDHPTTATTSPFPLSIQSNSFFSPVIAGNPVPQFHARVASSEAVEPSPSSRSQKEEEDEEVLEGNIRISSVYSQGLVKTLREALENSGVDLTKASISVEIELAKQSSSSSFKDHEVREPVSRTRNDNVKQTRKPKRLKTGQ</sequence>
<keyword id="KW-0025">Alternative splicing</keyword>
<keyword id="KW-0238">DNA-binding</keyword>
<keyword id="KW-0539">Nucleus</keyword>
<keyword id="KW-1185">Reference proteome</keyword>
<keyword id="KW-0804">Transcription</keyword>
<keyword id="KW-0805">Transcription regulation</keyword>
<protein>
    <recommendedName>
        <fullName>Transcription factor BIM1</fullName>
    </recommendedName>
    <alternativeName>
        <fullName>BES1-interacting Myc-like protein 1</fullName>
    </alternativeName>
    <alternativeName>
        <fullName>Basic helix-loop-helix protein 46</fullName>
        <shortName>AtbHLH46</shortName>
        <shortName>bHLH 46</shortName>
    </alternativeName>
    <alternativeName>
        <fullName>Transcription factor EN 126</fullName>
    </alternativeName>
    <alternativeName>
        <fullName>bHLH transcription factor bHLH046</fullName>
    </alternativeName>
</protein>
<feature type="chain" id="PRO_0000127153" description="Transcription factor BIM1">
    <location>
        <begin position="1"/>
        <end position="529"/>
    </location>
</feature>
<feature type="domain" description="bHLH" evidence="1">
    <location>
        <begin position="276"/>
        <end position="326"/>
    </location>
</feature>
<feature type="region of interest" description="Disordered" evidence="2">
    <location>
        <begin position="1"/>
        <end position="91"/>
    </location>
</feature>
<feature type="region of interest" description="Disordered" evidence="2">
    <location>
        <begin position="245"/>
        <end position="291"/>
    </location>
</feature>
<feature type="region of interest" description="Disordered" evidence="2">
    <location>
        <begin position="425"/>
        <end position="450"/>
    </location>
</feature>
<feature type="region of interest" description="Disordered" evidence="2">
    <location>
        <begin position="491"/>
        <end position="529"/>
    </location>
</feature>
<feature type="compositionally biased region" description="Pro residues" evidence="2">
    <location>
        <begin position="76"/>
        <end position="86"/>
    </location>
</feature>
<feature type="compositionally biased region" description="Basic and acidic residues" evidence="2">
    <location>
        <begin position="255"/>
        <end position="265"/>
    </location>
</feature>
<feature type="compositionally biased region" description="Basic and acidic residues" evidence="2">
    <location>
        <begin position="282"/>
        <end position="291"/>
    </location>
</feature>
<feature type="compositionally biased region" description="Low complexity" evidence="2">
    <location>
        <begin position="426"/>
        <end position="438"/>
    </location>
</feature>
<feature type="compositionally biased region" description="Basic and acidic residues" evidence="2">
    <location>
        <begin position="499"/>
        <end position="517"/>
    </location>
</feature>
<feature type="compositionally biased region" description="Basic residues" evidence="2">
    <location>
        <begin position="518"/>
        <end position="529"/>
    </location>
</feature>
<feature type="splice variant" id="VSP_035543" description="In isoform 2." evidence="6">
    <location>
        <begin position="1"/>
        <end position="120"/>
    </location>
</feature>
<feature type="sequence conflict" description="In Ref. 1; AF488581." evidence="7" ref="1">
    <original>S</original>
    <variation>P</variation>
    <location>
        <position position="282"/>
    </location>
</feature>
<feature type="sequence conflict" description="In Ref. 1; AF488581." evidence="7" ref="1">
    <original>S</original>
    <variation>P</variation>
    <location>
        <position position="336"/>
    </location>
</feature>
<feature type="sequence conflict" description="In Ref. 1; AF488581." evidence="7" ref="1">
    <original>I</original>
    <variation>T</variation>
    <location>
        <position position="389"/>
    </location>
</feature>
<proteinExistence type="evidence at protein level"/>
<accession>Q9LEZ3</accession>
<accession>A1L4Z3</accession>
<comment type="function">
    <text evidence="4">Positive brassinosteroid-signaling protein. Transcription factor that bind specifically to the DNA sequence 5'-CANNTG-3'(E box). Can bind individually to the promoter as a homodimer or synergistically as a heterodimer with BZR2/BES1. Does not itself activate transcription but enhances BZR2/BES1-mediated target gene activation.</text>
</comment>
<comment type="subunit">
    <text evidence="4 5 7">Homodimer (Probable). Interacts with BZR2/BES1 through both C-terminal and bHLH domains. Also interacts with LHW.</text>
</comment>
<comment type="interaction">
    <interactant intactId="EBI-617095">
        <id>Q9LEZ3</id>
    </interactant>
    <interactant intactId="EBI-25514634">
        <id>P32068</id>
        <label>ASA1</label>
    </interactant>
    <organismsDiffer>false</organismsDiffer>
    <experiments>3</experiments>
</comment>
<comment type="interaction">
    <interactant intactId="EBI-617095">
        <id>Q9LEZ3</id>
    </interactant>
    <interactant intactId="EBI-4445671">
        <id>Q9LS86</id>
        <label>At3g23060</label>
    </interactant>
    <organismsDiffer>false</organismsDiffer>
    <experiments>3</experiments>
</comment>
<comment type="interaction">
    <interactant intactId="EBI-617095">
        <id>Q9LEZ3</id>
    </interactant>
    <interactant intactId="EBI-25511160">
        <id>A0A178U7R5</id>
        <label>At5g67220</label>
    </interactant>
    <organismsDiffer>false</organismsDiffer>
    <experiments>4</experiments>
</comment>
<comment type="interaction">
    <interactant intactId="EBI-617095">
        <id>Q9LEZ3</id>
    </interactant>
    <interactant intactId="EBI-1536772">
        <id>O04292</id>
        <label>ATHB-9</label>
    </interactant>
    <organismsDiffer>false</organismsDiffer>
    <experiments>5</experiments>
</comment>
<comment type="interaction">
    <interactant intactId="EBI-617095">
        <id>Q9LEZ3</id>
    </interactant>
    <interactant intactId="EBI-25514615">
        <id>A0A178WJS6</id>
        <label>AXX17_At1g69380</label>
    </interactant>
    <organismsDiffer>false</organismsDiffer>
    <experiments>3</experiments>
</comment>
<comment type="interaction">
    <interactant intactId="EBI-617095">
        <id>Q9LEZ3</id>
    </interactant>
    <interactant intactId="EBI-617095">
        <id>Q9LEZ3</id>
        <label>BIM1</label>
    </interactant>
    <organismsDiffer>false</organismsDiffer>
    <experiments>3</experiments>
</comment>
<comment type="interaction">
    <interactant intactId="EBI-617095">
        <id>Q9LEZ3</id>
    </interactant>
    <interactant intactId="EBI-4476396">
        <id>Q9CAA4</id>
        <label>BIM2</label>
    </interactant>
    <organismsDiffer>false</organismsDiffer>
    <experiments>14</experiments>
</comment>
<comment type="interaction">
    <interactant intactId="EBI-617095">
        <id>Q9LEZ3</id>
    </interactant>
    <interactant intactId="EBI-617113">
        <id>Q9FMB6</id>
        <label>BIM3</label>
    </interactant>
    <organismsDiffer>false</organismsDiffer>
    <experiments>6</experiments>
</comment>
<comment type="interaction">
    <interactant intactId="EBI-617095">
        <id>Q9LEZ3</id>
    </interactant>
    <interactant intactId="EBI-4426649">
        <id>Q17TI5</id>
        <label>BRX</label>
    </interactant>
    <organismsDiffer>false</organismsDiffer>
    <experiments>5</experiments>
</comment>
<comment type="interaction">
    <interactant intactId="EBI-617095">
        <id>Q9LEZ3</id>
    </interactant>
    <interactant intactId="EBI-617078">
        <id>Q9LN63</id>
        <label>BZR2</label>
    </interactant>
    <organismsDiffer>false</organismsDiffer>
    <experiments>2</experiments>
</comment>
<comment type="interaction">
    <interactant intactId="EBI-617095">
        <id>Q9LEZ3</id>
    </interactant>
    <interactant intactId="EBI-15197527">
        <id>Q8L925</id>
        <label>CRC</label>
    </interactant>
    <organismsDiffer>false</organismsDiffer>
    <experiments>3</experiments>
</comment>
<comment type="interaction">
    <interactant intactId="EBI-617095">
        <id>Q9LEZ3</id>
    </interactant>
    <interactant intactId="EBI-4433324">
        <id>Q8GW17</id>
        <label>ERF116</label>
    </interactant>
    <organismsDiffer>false</organismsDiffer>
    <experiments>3</experiments>
</comment>
<comment type="interaction">
    <interactant intactId="EBI-617095">
        <id>Q9LEZ3</id>
    </interactant>
    <interactant intactId="EBI-1536756">
        <id>Q9SAD4</id>
        <label>ESR1</label>
    </interactant>
    <organismsDiffer>false</organismsDiffer>
    <experiments>4</experiments>
</comment>
<comment type="interaction">
    <interactant intactId="EBI-617095">
        <id>Q9LEZ3</id>
    </interactant>
    <interactant intactId="EBI-1536925">
        <id>Q9FYK5</id>
        <label>ESR2</label>
    </interactant>
    <organismsDiffer>false</organismsDiffer>
    <experiments>2</experiments>
</comment>
<comment type="interaction">
    <interactant intactId="EBI-617095">
        <id>Q9LEZ3</id>
    </interactant>
    <interactant intactId="EBI-25514661">
        <id>Q93ZB9</id>
        <label>FAR3</label>
    </interactant>
    <organismsDiffer>false</organismsDiffer>
    <experiments>3</experiments>
</comment>
<comment type="interaction">
    <interactant intactId="EBI-617095">
        <id>Q9LEZ3</id>
    </interactant>
    <interactant intactId="EBI-4447281">
        <id>F4IMQ0</id>
        <label>FLX</label>
    </interactant>
    <organismsDiffer>false</organismsDiffer>
    <experiments>3</experiments>
</comment>
<comment type="interaction">
    <interactant intactId="EBI-617095">
        <id>Q9LEZ3</id>
    </interactant>
    <interactant intactId="EBI-4470510">
        <id>Q9FK45</id>
        <label>MRG7.22</label>
    </interactant>
    <organismsDiffer>false</organismsDiffer>
    <experiments>3</experiments>
</comment>
<comment type="interaction">
    <interactant intactId="EBI-617095">
        <id>Q9LEZ3</id>
    </interactant>
    <interactant intactId="EBI-1775760">
        <id>Q9LMT2</id>
        <label>PAPS1</label>
    </interactant>
    <organismsDiffer>false</organismsDiffer>
    <experiments>3</experiments>
</comment>
<comment type="interaction">
    <interactant intactId="EBI-617095">
        <id>Q9LEZ3</id>
    </interactant>
    <interactant intactId="EBI-1645478">
        <id>Q38845</id>
        <label>PP2AA1</label>
    </interactant>
    <organismsDiffer>false</organismsDiffer>
    <experiments>3</experiments>
</comment>
<comment type="interaction">
    <interactant intactId="EBI-617095">
        <id>Q9LEZ3</id>
    </interactant>
    <interactant intactId="EBI-25516153">
        <id>Q9C8D1</id>
        <label>PUB20</label>
    </interactant>
    <organismsDiffer>false</organismsDiffer>
    <experiments>3</experiments>
</comment>
<comment type="interaction">
    <interactant intactId="EBI-617095">
        <id>Q9LEZ3</id>
    </interactant>
    <interactant intactId="EBI-1635572">
        <id>Q9C5Z3</id>
        <label>TIF3E1</label>
    </interactant>
    <organismsDiffer>false</organismsDiffer>
    <experiments>3</experiments>
</comment>
<comment type="interaction">
    <interactant intactId="EBI-617095">
        <id>Q9LEZ3</id>
    </interactant>
    <interactant intactId="EBI-1115657">
        <id>Q9XFB1</id>
        <label>YAB3</label>
    </interactant>
    <organismsDiffer>false</organismsDiffer>
    <experiments>3</experiments>
</comment>
<comment type="subcellular location">
    <subcellularLocation>
        <location evidence="7">Nucleus</location>
    </subcellularLocation>
</comment>
<comment type="alternative products">
    <event type="alternative splicing"/>
    <isoform>
        <id>Q9LEZ3-1</id>
        <name>1</name>
        <sequence type="displayed"/>
    </isoform>
    <isoform>
        <id>Q9LEZ3-2</id>
        <name>2</name>
        <sequence type="described" ref="VSP_035543"/>
    </isoform>
</comment>
<comment type="tissue specificity">
    <text evidence="3">Expressed constitutively in roots.</text>
</comment>
<comment type="induction">
    <text evidence="3">Repressed by cold treatment.</text>
</comment>
<comment type="sequence caution" evidence="7">
    <conflict type="erroneous gene model prediction">
        <sequence resource="EMBL-CDS" id="CAB93714"/>
    </conflict>
</comment>